<dbReference type="EMBL" id="M77189">
    <property type="protein sequence ID" value="AAA26198.1"/>
    <property type="molecule type" value="Genomic_DNA"/>
</dbReference>
<dbReference type="EMBL" id="BA000040">
    <property type="protein sequence ID" value="BAC46688.1"/>
    <property type="molecule type" value="Genomic_DNA"/>
</dbReference>
<dbReference type="PIR" id="A41331">
    <property type="entry name" value="A41331"/>
</dbReference>
<dbReference type="RefSeq" id="NP_768063.1">
    <property type="nucleotide sequence ID" value="NC_004463.1"/>
</dbReference>
<dbReference type="RefSeq" id="WP_011084240.1">
    <property type="nucleotide sequence ID" value="NC_004463.1"/>
</dbReference>
<dbReference type="SMR" id="P30323"/>
<dbReference type="STRING" id="224911.AAV28_04055"/>
<dbReference type="EnsemblBacteria" id="BAC46688">
    <property type="protein sequence ID" value="BAC46688"/>
    <property type="gene ID" value="BAC46688"/>
</dbReference>
<dbReference type="GeneID" id="46488698"/>
<dbReference type="KEGG" id="bja:blr1423"/>
<dbReference type="PATRIC" id="fig|224911.44.peg.851"/>
<dbReference type="eggNOG" id="COG3474">
    <property type="taxonomic scope" value="Bacteria"/>
</dbReference>
<dbReference type="HOGENOM" id="CLU_060944_4_0_5"/>
<dbReference type="InParanoid" id="P30323"/>
<dbReference type="OrthoDB" id="9805828at2"/>
<dbReference type="PhylomeDB" id="P30323"/>
<dbReference type="Proteomes" id="UP000002526">
    <property type="component" value="Chromosome"/>
</dbReference>
<dbReference type="GO" id="GO:0005886">
    <property type="term" value="C:plasma membrane"/>
    <property type="evidence" value="ECO:0007669"/>
    <property type="project" value="UniProtKB-SubCell"/>
</dbReference>
<dbReference type="GO" id="GO:0009055">
    <property type="term" value="F:electron transfer activity"/>
    <property type="evidence" value="ECO:0007669"/>
    <property type="project" value="InterPro"/>
</dbReference>
<dbReference type="GO" id="GO:0020037">
    <property type="term" value="F:heme binding"/>
    <property type="evidence" value="ECO:0007669"/>
    <property type="project" value="InterPro"/>
</dbReference>
<dbReference type="GO" id="GO:0046872">
    <property type="term" value="F:metal ion binding"/>
    <property type="evidence" value="ECO:0007669"/>
    <property type="project" value="UniProtKB-KW"/>
</dbReference>
<dbReference type="Gene3D" id="1.10.760.10">
    <property type="entry name" value="Cytochrome c-like domain"/>
    <property type="match status" value="1"/>
</dbReference>
<dbReference type="InterPro" id="IPR009056">
    <property type="entry name" value="Cyt_c-like_dom"/>
</dbReference>
<dbReference type="InterPro" id="IPR036909">
    <property type="entry name" value="Cyt_c-like_dom_sf"/>
</dbReference>
<dbReference type="InterPro" id="IPR002327">
    <property type="entry name" value="Cyt_c_1A/1B"/>
</dbReference>
<dbReference type="PANTHER" id="PTHR11961">
    <property type="entry name" value="CYTOCHROME C"/>
    <property type="match status" value="1"/>
</dbReference>
<dbReference type="Pfam" id="PF00034">
    <property type="entry name" value="Cytochrom_C"/>
    <property type="match status" value="1"/>
</dbReference>
<dbReference type="PRINTS" id="PR00604">
    <property type="entry name" value="CYTCHRMECIAB"/>
</dbReference>
<dbReference type="SUPFAM" id="SSF46626">
    <property type="entry name" value="Cytochrome c"/>
    <property type="match status" value="1"/>
</dbReference>
<dbReference type="PROSITE" id="PS51007">
    <property type="entry name" value="CYTC"/>
    <property type="match status" value="1"/>
</dbReference>
<feature type="chain" id="PRO_0000108415" description="Cytochrome c homolog">
    <location>
        <begin position="1"/>
        <end position="184"/>
    </location>
</feature>
<feature type="topological domain" description="Cytoplasmic" evidence="2">
    <location>
        <begin position="1"/>
        <end position="10"/>
    </location>
</feature>
<feature type="transmembrane region" description="Helical; Signal-anchor" evidence="2">
    <location>
        <begin position="11"/>
        <end position="31"/>
    </location>
</feature>
<feature type="topological domain" description="Periplasmic" evidence="2">
    <location>
        <begin position="32"/>
        <end position="184"/>
    </location>
</feature>
<feature type="binding site" description="covalent" evidence="3">
    <location>
        <position position="84"/>
    </location>
    <ligand>
        <name>heme c</name>
        <dbReference type="ChEBI" id="CHEBI:61717"/>
    </ligand>
</feature>
<feature type="binding site" description="covalent" evidence="3">
    <location>
        <position position="87"/>
    </location>
    <ligand>
        <name>heme c</name>
        <dbReference type="ChEBI" id="CHEBI:61717"/>
    </ligand>
</feature>
<feature type="binding site" description="axial binding residue" evidence="3">
    <location>
        <position position="88"/>
    </location>
    <ligand>
        <name>heme c</name>
        <dbReference type="ChEBI" id="CHEBI:61717"/>
    </ligand>
    <ligandPart>
        <name>Fe</name>
        <dbReference type="ChEBI" id="CHEBI:18248"/>
    </ligandPart>
</feature>
<feature type="binding site" description="axial binding residue" evidence="3">
    <location>
        <position position="151"/>
    </location>
    <ligand>
        <name>heme c</name>
        <dbReference type="ChEBI" id="CHEBI:61717"/>
    </ligand>
    <ligandPart>
        <name>Fe</name>
        <dbReference type="ChEBI" id="CHEBI:18248"/>
    </ligandPart>
</feature>
<proteinExistence type="inferred from homology"/>
<reference key="1">
    <citation type="journal article" date="1991" name="J. Bacteriol.">
        <title>The Bradyrhizobium japonicum cycM gene encodes a membrane-anchored homolog of mitochondrial cytochrome c.</title>
        <authorList>
            <person name="Bott M."/>
            <person name="Ritz D."/>
            <person name="Hennecke H."/>
        </authorList>
    </citation>
    <scope>NUCLEOTIDE SEQUENCE [GENOMIC DNA]</scope>
    <scope>FUNCTION</scope>
    <scope>SUBCELLULAR LOCATION</scope>
    <source>
        <strain>USDA 110spc4</strain>
    </source>
</reference>
<reference key="2">
    <citation type="journal article" date="2002" name="DNA Res.">
        <title>Complete genomic sequence of nitrogen-fixing symbiotic bacterium Bradyrhizobium japonicum USDA110.</title>
        <authorList>
            <person name="Kaneko T."/>
            <person name="Nakamura Y."/>
            <person name="Sato S."/>
            <person name="Minamisawa K."/>
            <person name="Uchiumi T."/>
            <person name="Sasamoto S."/>
            <person name="Watanabe A."/>
            <person name="Idesawa K."/>
            <person name="Iriguchi M."/>
            <person name="Kawashima K."/>
            <person name="Kohara M."/>
            <person name="Matsumoto M."/>
            <person name="Shimpo S."/>
            <person name="Tsuruoka H."/>
            <person name="Wada T."/>
            <person name="Yamada M."/>
            <person name="Tabata S."/>
        </authorList>
    </citation>
    <scope>NUCLEOTIDE SEQUENCE [LARGE SCALE GENOMIC DNA]</scope>
    <source>
        <strain>JCM 10833 / BCRC 13528 / IAM 13628 / NBRC 14792 / USDA 110</strain>
    </source>
</reference>
<keyword id="KW-1003">Cell membrane</keyword>
<keyword id="KW-0249">Electron transport</keyword>
<keyword id="KW-0349">Heme</keyword>
<keyword id="KW-0408">Iron</keyword>
<keyword id="KW-0472">Membrane</keyword>
<keyword id="KW-0479">Metal-binding</keyword>
<keyword id="KW-1185">Reference proteome</keyword>
<keyword id="KW-0735">Signal-anchor</keyword>
<keyword id="KW-0812">Transmembrane</keyword>
<keyword id="KW-1133">Transmembrane helix</keyword>
<keyword id="KW-0813">Transport</keyword>
<name>CYCM_BRADU</name>
<evidence type="ECO:0000250" key="1"/>
<evidence type="ECO:0000255" key="2"/>
<evidence type="ECO:0000255" key="3">
    <source>
        <dbReference type="PROSITE-ProRule" id="PRU00433"/>
    </source>
</evidence>
<evidence type="ECO:0000269" key="4">
    <source>
    </source>
</evidence>
<evidence type="ECO:0000305" key="5"/>
<accession>P30323</accession>
<gene>
    <name type="primary">cycM</name>
    <name type="ordered locus">blr1423</name>
</gene>
<comment type="function">
    <text evidence="4">May be involved in electron transfer from bc1 complex to aa3.</text>
</comment>
<comment type="subcellular location">
    <subcellularLocation>
        <location evidence="4">Cell membrane</location>
        <topology evidence="4">Single-pass type II membrane protein</topology>
    </subcellularLocation>
</comment>
<comment type="PTM">
    <text evidence="1">Binds 1 heme c group covalently per subunit.</text>
</comment>
<comment type="similarity">
    <text evidence="5">Belongs to the cytochrome c family.</text>
</comment>
<protein>
    <recommendedName>
        <fullName>Cytochrome c homolog</fullName>
    </recommendedName>
</protein>
<organism>
    <name type="scientific">Bradyrhizobium diazoefficiens (strain JCM 10833 / BCRC 13528 / IAM 13628 / NBRC 14792 / USDA 110)</name>
    <dbReference type="NCBI Taxonomy" id="224911"/>
    <lineage>
        <taxon>Bacteria</taxon>
        <taxon>Pseudomonadati</taxon>
        <taxon>Pseudomonadota</taxon>
        <taxon>Alphaproteobacteria</taxon>
        <taxon>Hyphomicrobiales</taxon>
        <taxon>Nitrobacteraceae</taxon>
        <taxon>Bradyrhizobium</taxon>
    </lineage>
</organism>
<sequence>MDSFELNKILGAVLGTCLILLVTSFTANALFSPKMPEKPGFEIAVKEDAGHGKEGGAAAAASEPIEKLLQTASVEKGAAAAKKCGACHTFEKGGPNRVGPNLYGVVGEARGEGRNGFNFSAAMKGKGGTWTFDDLNKFIANPKGFIPGTAMGFAGIPKDSERADVIAYLNSLSEHPKPLPTASK</sequence>